<comment type="function">
    <text evidence="2 3 4 7">Cytochrome P450 monooxygenase; part of the gene cluster that mediates the biosynthesis of PR-toxin, a bicyclic sesquiterpene belonging to the eremophilane class and acting as a mycotoxin (PubMed:24239699). The first step of the pathway is catalyzed by the aristolochene synthase which performs the cyclization of trans,trans-farnesyl diphosphate (FPP) to the bicyclic sesquiterpene aristolochene (PubMed:24239699). Following the formation of aristolochene, the non-oxygenated aristolochene is converted to the trioxygenated intermediate eremofortin B, via 7-epi-neopetasone (PubMed:24239699). This conversion appears to involve three enzymes, a hydroxysterol oxidase-like enzyme, the quinone-oxidase prx3 that forms the quinone-type-structure in the bicyclic nucleus of aristolochene with the C8-oxo group and the C-3 hydroxyl group, and the P450 monooxygenase prx9 that introduces the epoxide at the double bond between carbons 1 and 2 (By similarity) (PubMed:24239699). No monoxy or dioxy-intermediates have been reported to be released to the broth, so these three early oxidative reactions may be coupled together (PubMed:24239699). Eremofortin B is further oxidized by another P450 monooxygenase, that introduces a second epoxide between carbons 7 and 11 prior to acetylation to eremofortin A by the acetyltransferase prx11 (By similarity). The second epoxidation may be performed by a second P450 monooxygenase (PubMed:24239699). After the acetylation step, eremofortin A is converted to eremofortin C and then to PR-toxin (PubMed:24239699). First the conversion of eremofortin A to eremofortin C proceeds by oxidation of the side chain of the molecule at C-12 and is catalyzed by the short-chain oxidoreductase prx1 (PubMed:24239699). The cytochrome P450 monooxygenase prx8 also plays a role in this step (By similarity). The primary alcohol formed at C-12 is finally oxidized by the short-chain alcohol dehydrogenase prx4 that forms PR-toxin (PubMed:24239699).</text>
</comment>
<comment type="cofactor">
    <cofactor evidence="1">
        <name>heme</name>
        <dbReference type="ChEBI" id="CHEBI:30413"/>
    </cofactor>
</comment>
<comment type="pathway">
    <text evidence="10">Sesquiterpene biosynthesis.</text>
</comment>
<comment type="subcellular location">
    <subcellularLocation>
        <location evidence="5">Membrane</location>
        <topology evidence="5">Single-pass membrane protein</topology>
    </subcellularLocation>
</comment>
<comment type="induction">
    <text evidence="7">Expression and the subsequent production of PR-toxin take place under static culture conditions (oxygen limited), whereas no expression of the PR-toxin genes occurs under the strongly aerated conditions required for optimal penicillin production (PubMed:24239699). There is a negative control of the transcription of the PR-toxin genes by the penicillin biosynthesis gene product(s), or by a regulatory peptide encoded by a small ORF inside the penicillin gene cluster (PubMed:24239699).</text>
</comment>
<comment type="similarity">
    <text evidence="9">Belongs to the cytochrome P450 family.</text>
</comment>
<keyword id="KW-0325">Glycoprotein</keyword>
<keyword id="KW-0349">Heme</keyword>
<keyword id="KW-0408">Iron</keyword>
<keyword id="KW-0472">Membrane</keyword>
<keyword id="KW-0479">Metal-binding</keyword>
<keyword id="KW-0503">Monooxygenase</keyword>
<keyword id="KW-0560">Oxidoreductase</keyword>
<keyword id="KW-1185">Reference proteome</keyword>
<keyword id="KW-0812">Transmembrane</keyword>
<keyword id="KW-1133">Transmembrane helix</keyword>
<sequence length="579" mass="65534">MDASKLPLGSFVGTTLLLFILYKLVKLAYYVGQAKNTGLPYTIVPVLETEFLGKLLTPLIRPLFTSRLSRGKGWPRWIRFSILDWAWEEKRRVHEELGDVFLVVSSEGLICYTADADMSWDVMNRRNEFLKPRDKYKVLEPYGPNVATTEGKAYNFHVRITAPPFNDGSGANDLVWNEASDQARALMESWSQENTTRDLSLDINRLTLAVIAYTGFGKRLDFKTEVSDLRNKIPPGYKMSLHHALHLVTTFMVKILLIPKWIMKMTSMKEIAVAHGELEKYMREMIRTETANLSKDSEYQSADAKGNLLTSVLRASAFEAKAAGRKQAFSEDEVLGNLFLYLLAGYETTANAMTYGFITLALRQDLQDRIIQEVDGVYAEAAAEGRTSLNYTDDFEKFQYTYGFMYEVFRLYPGVCIITKMVPKDTTITVYPENNSPQQHVLPAECRVYLNVNAVHYHERYWPDPWALKPDRWMGTIGATPNARSNKKVVAGDKSRQVRGTLMTFSGGARACLGRKFTQSEYISALATVLREYRIVLGEGMDAKVVKQEIDHLAAGTVTLAPLKYVKLALKKRTDVKTG</sequence>
<gene>
    <name evidence="8" type="primary">prx9</name>
    <name type="ORF">Pc12g06350</name>
    <name type="ORF">PCH_Pc12g06350</name>
</gene>
<organism>
    <name type="scientific">Penicillium rubens (strain ATCC 28089 / DSM 1075 / NRRL 1951 / Wisconsin 54-1255)</name>
    <name type="common">Penicillium chrysogenum</name>
    <dbReference type="NCBI Taxonomy" id="500485"/>
    <lineage>
        <taxon>Eukaryota</taxon>
        <taxon>Fungi</taxon>
        <taxon>Dikarya</taxon>
        <taxon>Ascomycota</taxon>
        <taxon>Pezizomycotina</taxon>
        <taxon>Eurotiomycetes</taxon>
        <taxon>Eurotiomycetidae</taxon>
        <taxon>Eurotiales</taxon>
        <taxon>Aspergillaceae</taxon>
        <taxon>Penicillium</taxon>
        <taxon>Penicillium chrysogenum species complex</taxon>
    </lineage>
</organism>
<evidence type="ECO:0000250" key="1">
    <source>
        <dbReference type="UniProtKB" id="P04798"/>
    </source>
</evidence>
<evidence type="ECO:0000250" key="2">
    <source>
        <dbReference type="UniProtKB" id="W6Q3Z9"/>
    </source>
</evidence>
<evidence type="ECO:0000250" key="3">
    <source>
        <dbReference type="UniProtKB" id="W6QB15"/>
    </source>
</evidence>
<evidence type="ECO:0000250" key="4">
    <source>
        <dbReference type="UniProtKB" id="W6QP10"/>
    </source>
</evidence>
<evidence type="ECO:0000255" key="5"/>
<evidence type="ECO:0000255" key="6">
    <source>
        <dbReference type="PROSITE-ProRule" id="PRU00498"/>
    </source>
</evidence>
<evidence type="ECO:0000269" key="7">
    <source>
    </source>
</evidence>
<evidence type="ECO:0000303" key="8">
    <source>
    </source>
</evidence>
<evidence type="ECO:0000305" key="9"/>
<evidence type="ECO:0000305" key="10">
    <source>
    </source>
</evidence>
<accession>B6H067</accession>
<dbReference type="EC" id="1.-.-.-" evidence="10"/>
<dbReference type="EMBL" id="AM920427">
    <property type="protein sequence ID" value="CAP80262.1"/>
    <property type="molecule type" value="Genomic_DNA"/>
</dbReference>
<dbReference type="RefSeq" id="XP_002557477.1">
    <property type="nucleotide sequence ID" value="XM_002557431.1"/>
</dbReference>
<dbReference type="SMR" id="B6H067"/>
<dbReference type="STRING" id="500485.B6H067"/>
<dbReference type="GlyCosmos" id="B6H067">
    <property type="glycosylation" value="3 sites, No reported glycans"/>
</dbReference>
<dbReference type="GeneID" id="8313021"/>
<dbReference type="KEGG" id="pcs:N7525_001916"/>
<dbReference type="VEuPathDB" id="FungiDB:PCH_Pc12g06350"/>
<dbReference type="eggNOG" id="KOG0157">
    <property type="taxonomic scope" value="Eukaryota"/>
</dbReference>
<dbReference type="HOGENOM" id="CLU_001570_25_2_1"/>
<dbReference type="OMA" id="QYTYGFM"/>
<dbReference type="OrthoDB" id="1470350at2759"/>
<dbReference type="BioCyc" id="PCHR:PC12G06350-MONOMER"/>
<dbReference type="Proteomes" id="UP000000724">
    <property type="component" value="Contig Pc00c12"/>
</dbReference>
<dbReference type="GO" id="GO:0016020">
    <property type="term" value="C:membrane"/>
    <property type="evidence" value="ECO:0007669"/>
    <property type="project" value="UniProtKB-SubCell"/>
</dbReference>
<dbReference type="GO" id="GO:0020037">
    <property type="term" value="F:heme binding"/>
    <property type="evidence" value="ECO:0007669"/>
    <property type="project" value="InterPro"/>
</dbReference>
<dbReference type="GO" id="GO:0005506">
    <property type="term" value="F:iron ion binding"/>
    <property type="evidence" value="ECO:0007669"/>
    <property type="project" value="InterPro"/>
</dbReference>
<dbReference type="GO" id="GO:0004497">
    <property type="term" value="F:monooxygenase activity"/>
    <property type="evidence" value="ECO:0007669"/>
    <property type="project" value="UniProtKB-KW"/>
</dbReference>
<dbReference type="GO" id="GO:0016705">
    <property type="term" value="F:oxidoreductase activity, acting on paired donors, with incorporation or reduction of molecular oxygen"/>
    <property type="evidence" value="ECO:0007669"/>
    <property type="project" value="InterPro"/>
</dbReference>
<dbReference type="GO" id="GO:0043386">
    <property type="term" value="P:mycotoxin biosynthetic process"/>
    <property type="evidence" value="ECO:0007669"/>
    <property type="project" value="UniProtKB-ARBA"/>
</dbReference>
<dbReference type="CDD" id="cd11070">
    <property type="entry name" value="CYP56-like"/>
    <property type="match status" value="1"/>
</dbReference>
<dbReference type="Gene3D" id="1.10.630.10">
    <property type="entry name" value="Cytochrome P450"/>
    <property type="match status" value="1"/>
</dbReference>
<dbReference type="InterPro" id="IPR001128">
    <property type="entry name" value="Cyt_P450"/>
</dbReference>
<dbReference type="InterPro" id="IPR017972">
    <property type="entry name" value="Cyt_P450_CS"/>
</dbReference>
<dbReference type="InterPro" id="IPR002401">
    <property type="entry name" value="Cyt_P450_E_grp-I"/>
</dbReference>
<dbReference type="InterPro" id="IPR036396">
    <property type="entry name" value="Cyt_P450_sf"/>
</dbReference>
<dbReference type="InterPro" id="IPR050121">
    <property type="entry name" value="Cytochrome_P450_monoxygenase"/>
</dbReference>
<dbReference type="PANTHER" id="PTHR24305">
    <property type="entry name" value="CYTOCHROME P450"/>
    <property type="match status" value="1"/>
</dbReference>
<dbReference type="PANTHER" id="PTHR24305:SF166">
    <property type="entry name" value="CYTOCHROME P450 12A4, MITOCHONDRIAL-RELATED"/>
    <property type="match status" value="1"/>
</dbReference>
<dbReference type="Pfam" id="PF00067">
    <property type="entry name" value="p450"/>
    <property type="match status" value="1"/>
</dbReference>
<dbReference type="PRINTS" id="PR00463">
    <property type="entry name" value="EP450I"/>
</dbReference>
<dbReference type="PRINTS" id="PR00385">
    <property type="entry name" value="P450"/>
</dbReference>
<dbReference type="SUPFAM" id="SSF48264">
    <property type="entry name" value="Cytochrome P450"/>
    <property type="match status" value="1"/>
</dbReference>
<dbReference type="PROSITE" id="PS00086">
    <property type="entry name" value="CYTOCHROME_P450"/>
    <property type="match status" value="1"/>
</dbReference>
<reference key="1">
    <citation type="journal article" date="2008" name="Nat. Biotechnol.">
        <title>Genome sequencing and analysis of the filamentous fungus Penicillium chrysogenum.</title>
        <authorList>
            <person name="van den Berg M.A."/>
            <person name="Albang R."/>
            <person name="Albermann K."/>
            <person name="Badger J.H."/>
            <person name="Daran J.-M."/>
            <person name="Driessen A.J.M."/>
            <person name="Garcia-Estrada C."/>
            <person name="Fedorova N.D."/>
            <person name="Harris D.M."/>
            <person name="Heijne W.H.M."/>
            <person name="Joardar V.S."/>
            <person name="Kiel J.A.K.W."/>
            <person name="Kovalchuk A."/>
            <person name="Martin J.F."/>
            <person name="Nierman W.C."/>
            <person name="Nijland J.G."/>
            <person name="Pronk J.T."/>
            <person name="Roubos J.A."/>
            <person name="van der Klei I.J."/>
            <person name="van Peij N.N.M.E."/>
            <person name="Veenhuis M."/>
            <person name="von Doehren H."/>
            <person name="Wagner C."/>
            <person name="Wortman J.R."/>
            <person name="Bovenberg R.A.L."/>
        </authorList>
    </citation>
    <scope>NUCLEOTIDE SEQUENCE [LARGE SCALE GENOMIC DNA]</scope>
    <source>
        <strain>ATCC 28089 / DSM 1075 / NRRL 1951 / Wisconsin 54-1255</strain>
    </source>
</reference>
<reference key="2">
    <citation type="journal article" date="2014" name="Fungal Genet. Biol.">
        <title>Molecular characterization of the PR-toxin gene cluster in Penicillium roqueforti and Penicillium chrysogenum: cross talk of secondary metabolite pathways.</title>
        <authorList>
            <person name="Hidalgo P.I."/>
            <person name="Ullan R.V."/>
            <person name="Albillos S.M."/>
            <person name="Montero O."/>
            <person name="Fernandez-Bodega M.A."/>
            <person name="Garcia-Estrada C."/>
            <person name="Fernandez-Aguado M."/>
            <person name="Martin J.F."/>
        </authorList>
    </citation>
    <scope>FUNCTION</scope>
    <scope>INDUCTION</scope>
    <scope>PATHWAY</scope>
</reference>
<name>PRX9_PENRW</name>
<proteinExistence type="evidence at transcript level"/>
<feature type="chain" id="PRO_0000451225" description="Cytochrome P450 monooxygenase prx9">
    <location>
        <begin position="1"/>
        <end position="579"/>
    </location>
</feature>
<feature type="transmembrane region" description="Helical" evidence="5">
    <location>
        <begin position="6"/>
        <end position="25"/>
    </location>
</feature>
<feature type="binding site" description="axial binding residue" evidence="1">
    <location>
        <position position="512"/>
    </location>
    <ligand>
        <name>heme</name>
        <dbReference type="ChEBI" id="CHEBI:30413"/>
    </ligand>
    <ligandPart>
        <name>Fe</name>
        <dbReference type="ChEBI" id="CHEBI:18248"/>
    </ligandPart>
</feature>
<feature type="glycosylation site" description="N-linked (GlcNAc...) asparagine" evidence="6">
    <location>
        <position position="194"/>
    </location>
</feature>
<feature type="glycosylation site" description="N-linked (GlcNAc...) asparagine" evidence="6">
    <location>
        <position position="292"/>
    </location>
</feature>
<feature type="glycosylation site" description="N-linked (GlcNAc...) asparagine" evidence="6">
    <location>
        <position position="390"/>
    </location>
</feature>
<protein>
    <recommendedName>
        <fullName evidence="8">Cytochrome P450 monooxygenase prx9</fullName>
        <ecNumber evidence="10">1.-.-.-</ecNumber>
    </recommendedName>
    <alternativeName>
        <fullName evidence="8">PR-toxin biosynthesis cluster protein 9</fullName>
    </alternativeName>
</protein>